<feature type="chain" id="PRO_0000151133" description="Undecaprenyl-diphosphatase 2">
    <location>
        <begin position="1"/>
        <end position="276"/>
    </location>
</feature>
<feature type="transmembrane region" description="Helical" evidence="1">
    <location>
        <begin position="4"/>
        <end position="24"/>
    </location>
</feature>
<feature type="transmembrane region" description="Helical" evidence="1">
    <location>
        <begin position="44"/>
        <end position="64"/>
    </location>
</feature>
<feature type="transmembrane region" description="Helical" evidence="1">
    <location>
        <begin position="87"/>
        <end position="107"/>
    </location>
</feature>
<feature type="transmembrane region" description="Helical" evidence="1">
    <location>
        <begin position="114"/>
        <end position="134"/>
    </location>
</feature>
<feature type="transmembrane region" description="Helical" evidence="1">
    <location>
        <begin position="150"/>
        <end position="170"/>
    </location>
</feature>
<feature type="transmembrane region" description="Helical" evidence="1">
    <location>
        <begin position="193"/>
        <end position="213"/>
    </location>
</feature>
<feature type="transmembrane region" description="Helical" evidence="1">
    <location>
        <begin position="225"/>
        <end position="245"/>
    </location>
</feature>
<feature type="transmembrane region" description="Helical" evidence="1">
    <location>
        <begin position="256"/>
        <end position="276"/>
    </location>
</feature>
<name>UPPP2_CHRVO</name>
<accession>Q7NWQ2</accession>
<comment type="function">
    <text evidence="1">Catalyzes the dephosphorylation of undecaprenyl diphosphate (UPP). Confers resistance to bacitracin.</text>
</comment>
<comment type="catalytic activity">
    <reaction evidence="1">
        <text>di-trans,octa-cis-undecaprenyl diphosphate + H2O = di-trans,octa-cis-undecaprenyl phosphate + phosphate + H(+)</text>
        <dbReference type="Rhea" id="RHEA:28094"/>
        <dbReference type="ChEBI" id="CHEBI:15377"/>
        <dbReference type="ChEBI" id="CHEBI:15378"/>
        <dbReference type="ChEBI" id="CHEBI:43474"/>
        <dbReference type="ChEBI" id="CHEBI:58405"/>
        <dbReference type="ChEBI" id="CHEBI:60392"/>
        <dbReference type="EC" id="3.6.1.27"/>
    </reaction>
</comment>
<comment type="subcellular location">
    <subcellularLocation>
        <location evidence="1">Cell inner membrane</location>
        <topology evidence="1">Multi-pass membrane protein</topology>
    </subcellularLocation>
</comment>
<comment type="miscellaneous">
    <text>Bacitracin is thought to be involved in the inhibition of peptidoglycan synthesis by sequestering undecaprenyl diphosphate, thereby reducing the pool of lipid carrier available.</text>
</comment>
<comment type="similarity">
    <text evidence="1">Belongs to the UppP family.</text>
</comment>
<dbReference type="EC" id="3.6.1.27" evidence="1"/>
<dbReference type="EMBL" id="AE016825">
    <property type="protein sequence ID" value="AAQ59603.1"/>
    <property type="molecule type" value="Genomic_DNA"/>
</dbReference>
<dbReference type="RefSeq" id="WP_011135480.1">
    <property type="nucleotide sequence ID" value="NC_005085.1"/>
</dbReference>
<dbReference type="SMR" id="Q7NWQ2"/>
<dbReference type="STRING" id="243365.CV_1929"/>
<dbReference type="GeneID" id="66367597"/>
<dbReference type="KEGG" id="cvi:CV_1929"/>
<dbReference type="eggNOG" id="COG1968">
    <property type="taxonomic scope" value="Bacteria"/>
</dbReference>
<dbReference type="HOGENOM" id="CLU_060296_1_1_4"/>
<dbReference type="OrthoDB" id="9808289at2"/>
<dbReference type="Proteomes" id="UP000001424">
    <property type="component" value="Chromosome"/>
</dbReference>
<dbReference type="GO" id="GO:0005886">
    <property type="term" value="C:plasma membrane"/>
    <property type="evidence" value="ECO:0007669"/>
    <property type="project" value="UniProtKB-SubCell"/>
</dbReference>
<dbReference type="GO" id="GO:0050380">
    <property type="term" value="F:undecaprenyl-diphosphatase activity"/>
    <property type="evidence" value="ECO:0007669"/>
    <property type="project" value="UniProtKB-UniRule"/>
</dbReference>
<dbReference type="GO" id="GO:0071555">
    <property type="term" value="P:cell wall organization"/>
    <property type="evidence" value="ECO:0007669"/>
    <property type="project" value="UniProtKB-KW"/>
</dbReference>
<dbReference type="GO" id="GO:0009252">
    <property type="term" value="P:peptidoglycan biosynthetic process"/>
    <property type="evidence" value="ECO:0007669"/>
    <property type="project" value="UniProtKB-KW"/>
</dbReference>
<dbReference type="GO" id="GO:0008360">
    <property type="term" value="P:regulation of cell shape"/>
    <property type="evidence" value="ECO:0007669"/>
    <property type="project" value="UniProtKB-KW"/>
</dbReference>
<dbReference type="GO" id="GO:0046677">
    <property type="term" value="P:response to antibiotic"/>
    <property type="evidence" value="ECO:0007669"/>
    <property type="project" value="UniProtKB-UniRule"/>
</dbReference>
<dbReference type="HAMAP" id="MF_01006">
    <property type="entry name" value="Undec_diphosphatase"/>
    <property type="match status" value="1"/>
</dbReference>
<dbReference type="InterPro" id="IPR003824">
    <property type="entry name" value="UppP"/>
</dbReference>
<dbReference type="NCBIfam" id="NF001397">
    <property type="entry name" value="PRK00281.3-4"/>
    <property type="match status" value="1"/>
</dbReference>
<dbReference type="PANTHER" id="PTHR30622">
    <property type="entry name" value="UNDECAPRENYL-DIPHOSPHATASE"/>
    <property type="match status" value="1"/>
</dbReference>
<dbReference type="PANTHER" id="PTHR30622:SF4">
    <property type="entry name" value="UNDECAPRENYL-DIPHOSPHATASE"/>
    <property type="match status" value="1"/>
</dbReference>
<dbReference type="Pfam" id="PF02673">
    <property type="entry name" value="BacA"/>
    <property type="match status" value="1"/>
</dbReference>
<protein>
    <recommendedName>
        <fullName evidence="1">Undecaprenyl-diphosphatase 2</fullName>
        <ecNumber evidence="1">3.6.1.27</ecNumber>
    </recommendedName>
    <alternativeName>
        <fullName evidence="1">Bacitracin resistance protein 2</fullName>
    </alternativeName>
    <alternativeName>
        <fullName evidence="1">Undecaprenyl pyrophosphate phosphatase 2</fullName>
    </alternativeName>
</protein>
<organism>
    <name type="scientific">Chromobacterium violaceum (strain ATCC 12472 / DSM 30191 / JCM 1249 / CCUG 213 / NBRC 12614 / NCIMB 9131 / NCTC 9757 / MK)</name>
    <dbReference type="NCBI Taxonomy" id="243365"/>
    <lineage>
        <taxon>Bacteria</taxon>
        <taxon>Pseudomonadati</taxon>
        <taxon>Pseudomonadota</taxon>
        <taxon>Betaproteobacteria</taxon>
        <taxon>Neisseriales</taxon>
        <taxon>Chromobacteriaceae</taxon>
        <taxon>Chromobacterium</taxon>
    </lineage>
</organism>
<evidence type="ECO:0000255" key="1">
    <source>
        <dbReference type="HAMAP-Rule" id="MF_01006"/>
    </source>
</evidence>
<proteinExistence type="inferred from homology"/>
<sequence length="276" mass="29651">MNAIEALLFAVIQGVSELFPVSSLGHGVLIPDWLHWSINRTHPDFLPFMVMLHLGTAAALLIYFRRDWVDLIGGWLKAGGRASNPHARLMWLVIAGTLPAGLLGLLLEKQLRALFASTTAVLVFLALNGLLLLWGDKLKKKTASHELSELSFAGAIKIGAGQALALLPGFSRSGATLVAGLAHGLDYASSARFSFLLATPIITAAGLLEIPKLAHRGNGSAEWGLLLACGAVSGLCAYASTWFLMRYFKKTEIESLRPFGFYCLLVGVVGLLFKLV</sequence>
<gene>
    <name evidence="1" type="primary">uppP2</name>
    <name type="synonym">bacA2</name>
    <name type="synonym">upk2</name>
    <name type="ordered locus">CV_1929</name>
</gene>
<keyword id="KW-0046">Antibiotic resistance</keyword>
<keyword id="KW-0997">Cell inner membrane</keyword>
<keyword id="KW-1003">Cell membrane</keyword>
<keyword id="KW-0133">Cell shape</keyword>
<keyword id="KW-0961">Cell wall biogenesis/degradation</keyword>
<keyword id="KW-0378">Hydrolase</keyword>
<keyword id="KW-0472">Membrane</keyword>
<keyword id="KW-0573">Peptidoglycan synthesis</keyword>
<keyword id="KW-1185">Reference proteome</keyword>
<keyword id="KW-0812">Transmembrane</keyword>
<keyword id="KW-1133">Transmembrane helix</keyword>
<reference key="1">
    <citation type="journal article" date="2003" name="Proc. Natl. Acad. Sci. U.S.A.">
        <title>The complete genome sequence of Chromobacterium violaceum reveals remarkable and exploitable bacterial adaptability.</title>
        <authorList>
            <person name="Vasconcelos A.T.R."/>
            <person name="de Almeida D.F."/>
            <person name="Hungria M."/>
            <person name="Guimaraes C.T."/>
            <person name="Antonio R.V."/>
            <person name="Almeida F.C."/>
            <person name="de Almeida L.G.P."/>
            <person name="de Almeida R."/>
            <person name="Alves-Gomes J.A."/>
            <person name="Andrade E.M."/>
            <person name="Araripe J."/>
            <person name="de Araujo M.F.F."/>
            <person name="Astolfi-Filho S."/>
            <person name="Azevedo V."/>
            <person name="Baptista A.J."/>
            <person name="Bataus L.A.M."/>
            <person name="Batista J.S."/>
            <person name="Belo A."/>
            <person name="van den Berg C."/>
            <person name="Bogo M."/>
            <person name="Bonatto S."/>
            <person name="Bordignon J."/>
            <person name="Brigido M.M."/>
            <person name="Brito C.A."/>
            <person name="Brocchi M."/>
            <person name="Burity H.A."/>
            <person name="Camargo A.A."/>
            <person name="Cardoso D.D.P."/>
            <person name="Carneiro N.P."/>
            <person name="Carraro D.M."/>
            <person name="Carvalho C.M.B."/>
            <person name="Cascardo J.C.M."/>
            <person name="Cavada B.S."/>
            <person name="Chueire L.M.O."/>
            <person name="Creczynski-Pasa T.B."/>
            <person name="Cunha-Junior N.C."/>
            <person name="Fagundes N."/>
            <person name="Falcao C.L."/>
            <person name="Fantinatti F."/>
            <person name="Farias I.P."/>
            <person name="Felipe M.S.S."/>
            <person name="Ferrari L.P."/>
            <person name="Ferro J.A."/>
            <person name="Ferro M.I.T."/>
            <person name="Franco G.R."/>
            <person name="Freitas N.S.A."/>
            <person name="Furlan L.R."/>
            <person name="Gazzinelli R.T."/>
            <person name="Gomes E.A."/>
            <person name="Goncalves P.R."/>
            <person name="Grangeiro T.B."/>
            <person name="Grattapaglia D."/>
            <person name="Grisard E.C."/>
            <person name="Hanna E.S."/>
            <person name="Jardim S.N."/>
            <person name="Laurino J."/>
            <person name="Leoi L.C.T."/>
            <person name="Lima L.F.A."/>
            <person name="Loureiro M.F."/>
            <person name="Lyra M.C.C.P."/>
            <person name="Madeira H.M.F."/>
            <person name="Manfio G.P."/>
            <person name="Maranhao A.Q."/>
            <person name="Martins W.S."/>
            <person name="di Mauro S.M.Z."/>
            <person name="de Medeiros S.R.B."/>
            <person name="Meissner R.V."/>
            <person name="Moreira M.A.M."/>
            <person name="Nascimento F.F."/>
            <person name="Nicolas M.F."/>
            <person name="Oliveira J.G."/>
            <person name="Oliveira S.C."/>
            <person name="Paixao R.F.C."/>
            <person name="Parente J.A."/>
            <person name="Pedrosa F.O."/>
            <person name="Pena S.D.J."/>
            <person name="Pereira J.O."/>
            <person name="Pereira M."/>
            <person name="Pinto L.S.R.C."/>
            <person name="Pinto L.S."/>
            <person name="Porto J.I.R."/>
            <person name="Potrich D.P."/>
            <person name="Ramalho-Neto C.E."/>
            <person name="Reis A.M.M."/>
            <person name="Rigo L.U."/>
            <person name="Rondinelli E."/>
            <person name="Santos E.B.P."/>
            <person name="Santos F.R."/>
            <person name="Schneider M.P.C."/>
            <person name="Seuanez H.N."/>
            <person name="Silva A.M.R."/>
            <person name="da Silva A.L.C."/>
            <person name="Silva D.W."/>
            <person name="Silva R."/>
            <person name="Simoes I.C."/>
            <person name="Simon D."/>
            <person name="Soares C.M.A."/>
            <person name="Soares R.B.A."/>
            <person name="Souza E.M."/>
            <person name="Souza K.R.L."/>
            <person name="Souza R.C."/>
            <person name="Steffens M.B.R."/>
            <person name="Steindel M."/>
            <person name="Teixeira S.R."/>
            <person name="Urmenyi T."/>
            <person name="Vettore A."/>
            <person name="Wassem R."/>
            <person name="Zaha A."/>
            <person name="Simpson A.J.G."/>
        </authorList>
    </citation>
    <scope>NUCLEOTIDE SEQUENCE [LARGE SCALE GENOMIC DNA]</scope>
    <source>
        <strain>ATCC 12472 / DSM 30191 / JCM 1249 / CCUG 213 / NBRC 12614 / NCIMB 9131 / NCTC 9757 / MK</strain>
    </source>
</reference>